<proteinExistence type="inferred from homology"/>
<protein>
    <recommendedName>
        <fullName evidence="1">Cobyric acid synthase</fullName>
    </recommendedName>
</protein>
<sequence length="501" mass="55803">MNKKNIMFLGTASSVGKSTLVAALCRVLKNEDFKVSPFKAMNISLNSYVTKDGAEMGRAQVVQAEASKIEPSALMNPILLKPSGGHTQVIVNGKVYDNIEPYEYKELNKKLKGIVKESYDRISNEYDLIVLEGSGGCAEINLKDTDIANMNMAECVDAPVILVADIDRGGVFASIVGTLNLLSENERKRVKGVIINKFRGKKEYFEPGVKQLEDIIKIPVLGVMPYEYFDIDDEDSVTEKISNKESTEAKNIDIAIIRLSHMSNFTDFNVLNRINGVNIRYVESTKYLKNPDVIIIPGTKNTIEDLRILKESKLANEIIKLHESGTLVFGICGGYQMLGKLLLDQQGVEGSTFQEEGLGLLDIKTRFNERKVTKQVEAQVVSNLKHINEIENKSLVGYEIHNGISKVGKNAKPFIKDSKGKIIGVCDMEGSVAGTYLHGIFDSEEFTNSFINALKKNNNFELLENDELDKVSDYKNEQYEKLAKVFSDNIDVSKIKEIMGI</sequence>
<keyword id="KW-0169">Cobalamin biosynthesis</keyword>
<keyword id="KW-0315">Glutamine amidotransferase</keyword>
<dbReference type="EMBL" id="CP001078">
    <property type="protein sequence ID" value="ACD53442.1"/>
    <property type="molecule type" value="Genomic_DNA"/>
</dbReference>
<dbReference type="RefSeq" id="WP_012451340.1">
    <property type="nucleotide sequence ID" value="NC_010723.1"/>
</dbReference>
<dbReference type="SMR" id="B2UXD4"/>
<dbReference type="KEGG" id="cbt:CLH_2659"/>
<dbReference type="HOGENOM" id="CLU_019250_2_2_9"/>
<dbReference type="UniPathway" id="UPA00148"/>
<dbReference type="GO" id="GO:0015420">
    <property type="term" value="F:ABC-type vitamin B12 transporter activity"/>
    <property type="evidence" value="ECO:0007669"/>
    <property type="project" value="UniProtKB-UniRule"/>
</dbReference>
<dbReference type="GO" id="GO:0003824">
    <property type="term" value="F:catalytic activity"/>
    <property type="evidence" value="ECO:0007669"/>
    <property type="project" value="InterPro"/>
</dbReference>
<dbReference type="GO" id="GO:0009236">
    <property type="term" value="P:cobalamin biosynthetic process"/>
    <property type="evidence" value="ECO:0007669"/>
    <property type="project" value="UniProtKB-UniRule"/>
</dbReference>
<dbReference type="CDD" id="cd05389">
    <property type="entry name" value="CobQ_N"/>
    <property type="match status" value="1"/>
</dbReference>
<dbReference type="CDD" id="cd01750">
    <property type="entry name" value="GATase1_CobQ"/>
    <property type="match status" value="1"/>
</dbReference>
<dbReference type="Gene3D" id="3.40.50.880">
    <property type="match status" value="1"/>
</dbReference>
<dbReference type="Gene3D" id="3.40.50.300">
    <property type="entry name" value="P-loop containing nucleotide triphosphate hydrolases"/>
    <property type="match status" value="1"/>
</dbReference>
<dbReference type="HAMAP" id="MF_00028">
    <property type="entry name" value="CobQ"/>
    <property type="match status" value="1"/>
</dbReference>
<dbReference type="InterPro" id="IPR029062">
    <property type="entry name" value="Class_I_gatase-like"/>
</dbReference>
<dbReference type="InterPro" id="IPR002586">
    <property type="entry name" value="CobQ/CobB/MinD/ParA_Nub-bd_dom"/>
</dbReference>
<dbReference type="InterPro" id="IPR033949">
    <property type="entry name" value="CobQ_GATase1"/>
</dbReference>
<dbReference type="InterPro" id="IPR047045">
    <property type="entry name" value="CobQ_N"/>
</dbReference>
<dbReference type="InterPro" id="IPR004459">
    <property type="entry name" value="CobQ_synth"/>
</dbReference>
<dbReference type="InterPro" id="IPR011698">
    <property type="entry name" value="GATase_3"/>
</dbReference>
<dbReference type="InterPro" id="IPR027417">
    <property type="entry name" value="P-loop_NTPase"/>
</dbReference>
<dbReference type="NCBIfam" id="TIGR00313">
    <property type="entry name" value="cobQ"/>
    <property type="match status" value="1"/>
</dbReference>
<dbReference type="NCBIfam" id="NF001989">
    <property type="entry name" value="PRK00784.1"/>
    <property type="match status" value="1"/>
</dbReference>
<dbReference type="PANTHER" id="PTHR21343:SF1">
    <property type="entry name" value="COBYRIC ACID SYNTHASE"/>
    <property type="match status" value="1"/>
</dbReference>
<dbReference type="PANTHER" id="PTHR21343">
    <property type="entry name" value="DETHIOBIOTIN SYNTHETASE"/>
    <property type="match status" value="1"/>
</dbReference>
<dbReference type="Pfam" id="PF01656">
    <property type="entry name" value="CbiA"/>
    <property type="match status" value="1"/>
</dbReference>
<dbReference type="Pfam" id="PF07685">
    <property type="entry name" value="GATase_3"/>
    <property type="match status" value="1"/>
</dbReference>
<dbReference type="SUPFAM" id="SSF52317">
    <property type="entry name" value="Class I glutamine amidotransferase-like"/>
    <property type="match status" value="1"/>
</dbReference>
<dbReference type="SUPFAM" id="SSF52540">
    <property type="entry name" value="P-loop containing nucleoside triphosphate hydrolases"/>
    <property type="match status" value="1"/>
</dbReference>
<dbReference type="PROSITE" id="PS51274">
    <property type="entry name" value="GATASE_COBBQ"/>
    <property type="match status" value="1"/>
</dbReference>
<accession>B2UXD4</accession>
<organism>
    <name type="scientific">Clostridium botulinum (strain Alaska E43 / Type E3)</name>
    <dbReference type="NCBI Taxonomy" id="508767"/>
    <lineage>
        <taxon>Bacteria</taxon>
        <taxon>Bacillati</taxon>
        <taxon>Bacillota</taxon>
        <taxon>Clostridia</taxon>
        <taxon>Eubacteriales</taxon>
        <taxon>Clostridiaceae</taxon>
        <taxon>Clostridium</taxon>
    </lineage>
</organism>
<gene>
    <name evidence="1" type="primary">cobQ</name>
    <name type="ordered locus">CLH_2659</name>
</gene>
<feature type="chain" id="PRO_1000090223" description="Cobyric acid synthase">
    <location>
        <begin position="1"/>
        <end position="501"/>
    </location>
</feature>
<feature type="domain" description="GATase cobBQ-type" evidence="1">
    <location>
        <begin position="251"/>
        <end position="446"/>
    </location>
</feature>
<feature type="active site" description="Nucleophile" evidence="1">
    <location>
        <position position="332"/>
    </location>
</feature>
<feature type="active site" evidence="1">
    <location>
        <position position="438"/>
    </location>
</feature>
<comment type="function">
    <text evidence="1">Catalyzes amidations at positions B, D, E, and G on adenosylcobyrinic A,C-diamide. NH(2) groups are provided by glutamine, and one molecule of ATP is hydrogenolyzed for each amidation.</text>
</comment>
<comment type="pathway">
    <text evidence="1">Cofactor biosynthesis; adenosylcobalamin biosynthesis.</text>
</comment>
<comment type="similarity">
    <text evidence="1">Belongs to the CobB/CobQ family. CobQ subfamily.</text>
</comment>
<evidence type="ECO:0000255" key="1">
    <source>
        <dbReference type="HAMAP-Rule" id="MF_00028"/>
    </source>
</evidence>
<reference key="1">
    <citation type="submission" date="2008-05" db="EMBL/GenBank/DDBJ databases">
        <title>Complete genome sequence of Clostridium botulinum E3 str. Alaska E43.</title>
        <authorList>
            <person name="Brinkac L.M."/>
            <person name="Brown J.L."/>
            <person name="Bruce D."/>
            <person name="Detter C."/>
            <person name="Munk C."/>
            <person name="Smith L.A."/>
            <person name="Smith T.J."/>
            <person name="Sutton G."/>
            <person name="Brettin T.S."/>
        </authorList>
    </citation>
    <scope>NUCLEOTIDE SEQUENCE [LARGE SCALE GENOMIC DNA]</scope>
    <source>
        <strain>Alaska E43 / Type E3</strain>
    </source>
</reference>
<name>COBQ_CLOBA</name>